<feature type="chain" id="PRO_1000079225" description="Chaperone protein DnaK">
    <location>
        <begin position="1"/>
        <end position="638"/>
    </location>
</feature>
<feature type="region of interest" description="Disordered" evidence="2">
    <location>
        <begin position="602"/>
        <end position="638"/>
    </location>
</feature>
<feature type="compositionally biased region" description="Low complexity" evidence="2">
    <location>
        <begin position="602"/>
        <end position="620"/>
    </location>
</feature>
<feature type="modified residue" description="N6-acetyllysine" evidence="1">
    <location>
        <position position="109"/>
    </location>
</feature>
<feature type="modified residue" description="Phosphothreonine; by autocatalysis" evidence="1">
    <location>
        <position position="199"/>
    </location>
</feature>
<feature type="modified residue" description="N6-acetyllysine" evidence="1">
    <location>
        <position position="245"/>
    </location>
</feature>
<feature type="modified residue" description="N6-acetyllysine" evidence="1">
    <location>
        <position position="304"/>
    </location>
</feature>
<feature type="modified residue" description="N6-acetyllysine" evidence="1">
    <location>
        <position position="421"/>
    </location>
</feature>
<feature type="modified residue" description="N6-acetyllysine" evidence="1">
    <location>
        <position position="556"/>
    </location>
</feature>
<name>DNAK_ECOLC</name>
<gene>
    <name evidence="1" type="primary">dnaK</name>
    <name type="ordered locus">EcolC_3642</name>
</gene>
<keyword id="KW-0007">Acetylation</keyword>
<keyword id="KW-0067">ATP-binding</keyword>
<keyword id="KW-0143">Chaperone</keyword>
<keyword id="KW-0547">Nucleotide-binding</keyword>
<keyword id="KW-0597">Phosphoprotein</keyword>
<keyword id="KW-0346">Stress response</keyword>
<sequence>MGKIIGIDLGTTNSCVAIMDGTTPRVLENAEGDRTTPSIIAYTQDGETLVGQPAKRQAVTNPQNTLFAIKRLIGRRFQDEEVQRDVSIMPFKIIAADNGDAWVEVKGQKMAPPQISAEVLKKMKKTAEDYLGEPVTEAVITVPAYFNDAQRQATKDAGRIAGLEVKRIINEPTAAALAYGLDKGTGNRTIAVYDLGGGTFDISIIEIDEVDGEKTFEVLATNGDTHLGGEDFDSRLINYLVEEFKKDQGIDLRNDPLAMQRLKEAAEKAKIELSSAQQTDVNLPYITADATGPKHMNIKVTRAKLESLVEDLVNRSIEPLKVALQDAGLSVSDIDDVILVGGQTRMPMVQKKVAEFFGKEPRKDVNPDEAVAIGAAVQGGVLTGDVKDVLLLDVTPLSLGIETMGGVMTTLIAKNTTIPTKHSQVFSTAEDNQSAVTIHVLQGERKRAADNKSLGQFNLDGINPAPRGMPQIEVTFDIDADGILHVSAKDKNSGKEQKITIKASSGLNEDEIQKMVRDAEANAEADRKFEELVQTRNQGDHLLHSTRKQVEEAGDKLPADDKTAIESALTALETALKGEDKAAIEAKMQELAQVSQKLMEIAQQQHAQQQTAGADASANNAKDDDVVDAEFEEVKDKK</sequence>
<evidence type="ECO:0000255" key="1">
    <source>
        <dbReference type="HAMAP-Rule" id="MF_00332"/>
    </source>
</evidence>
<evidence type="ECO:0000256" key="2">
    <source>
        <dbReference type="SAM" id="MobiDB-lite"/>
    </source>
</evidence>
<protein>
    <recommendedName>
        <fullName evidence="1">Chaperone protein DnaK</fullName>
    </recommendedName>
    <alternativeName>
        <fullName evidence="1">HSP70</fullName>
    </alternativeName>
    <alternativeName>
        <fullName evidence="1">Heat shock 70 kDa protein</fullName>
    </alternativeName>
    <alternativeName>
        <fullName evidence="1">Heat shock protein 70</fullName>
    </alternativeName>
</protein>
<reference key="1">
    <citation type="submission" date="2008-02" db="EMBL/GenBank/DDBJ databases">
        <title>Complete sequence of Escherichia coli C str. ATCC 8739.</title>
        <authorList>
            <person name="Copeland A."/>
            <person name="Lucas S."/>
            <person name="Lapidus A."/>
            <person name="Glavina del Rio T."/>
            <person name="Dalin E."/>
            <person name="Tice H."/>
            <person name="Bruce D."/>
            <person name="Goodwin L."/>
            <person name="Pitluck S."/>
            <person name="Kiss H."/>
            <person name="Brettin T."/>
            <person name="Detter J.C."/>
            <person name="Han C."/>
            <person name="Kuske C.R."/>
            <person name="Schmutz J."/>
            <person name="Larimer F."/>
            <person name="Land M."/>
            <person name="Hauser L."/>
            <person name="Kyrpides N."/>
            <person name="Mikhailova N."/>
            <person name="Ingram L."/>
            <person name="Richardson P."/>
        </authorList>
    </citation>
    <scope>NUCLEOTIDE SEQUENCE [LARGE SCALE GENOMIC DNA]</scope>
    <source>
        <strain>ATCC 8739 / DSM 1576 / NBRC 3972 / NCIMB 8545 / WDCM 00012 / Crooks</strain>
    </source>
</reference>
<proteinExistence type="inferred from homology"/>
<comment type="function">
    <text evidence="1">Acts as a chaperone.</text>
</comment>
<comment type="induction">
    <text evidence="1">By stress conditions e.g. heat shock.</text>
</comment>
<comment type="similarity">
    <text evidence="1">Belongs to the heat shock protein 70 family.</text>
</comment>
<accession>B1IRG0</accession>
<dbReference type="EMBL" id="CP000946">
    <property type="protein sequence ID" value="ACA79253.1"/>
    <property type="molecule type" value="Genomic_DNA"/>
</dbReference>
<dbReference type="RefSeq" id="WP_000516135.1">
    <property type="nucleotide sequence ID" value="NZ_MTFT01000024.1"/>
</dbReference>
<dbReference type="SMR" id="B1IRG0"/>
<dbReference type="GeneID" id="93777429"/>
<dbReference type="KEGG" id="ecl:EcolC_3642"/>
<dbReference type="HOGENOM" id="CLU_005965_2_1_6"/>
<dbReference type="GO" id="GO:0005524">
    <property type="term" value="F:ATP binding"/>
    <property type="evidence" value="ECO:0007669"/>
    <property type="project" value="UniProtKB-UniRule"/>
</dbReference>
<dbReference type="GO" id="GO:0140662">
    <property type="term" value="F:ATP-dependent protein folding chaperone"/>
    <property type="evidence" value="ECO:0007669"/>
    <property type="project" value="InterPro"/>
</dbReference>
<dbReference type="GO" id="GO:0051082">
    <property type="term" value="F:unfolded protein binding"/>
    <property type="evidence" value="ECO:0007669"/>
    <property type="project" value="InterPro"/>
</dbReference>
<dbReference type="CDD" id="cd10234">
    <property type="entry name" value="ASKHA_NBD_HSP70_DnaK-like"/>
    <property type="match status" value="1"/>
</dbReference>
<dbReference type="FunFam" id="2.60.34.10:FF:000014">
    <property type="entry name" value="Chaperone protein DnaK HSP70"/>
    <property type="match status" value="1"/>
</dbReference>
<dbReference type="FunFam" id="1.20.1270.10:FF:000001">
    <property type="entry name" value="Molecular chaperone DnaK"/>
    <property type="match status" value="1"/>
</dbReference>
<dbReference type="FunFam" id="3.30.420.40:FF:000004">
    <property type="entry name" value="Molecular chaperone DnaK"/>
    <property type="match status" value="1"/>
</dbReference>
<dbReference type="FunFam" id="3.90.640.10:FF:000003">
    <property type="entry name" value="Molecular chaperone DnaK"/>
    <property type="match status" value="1"/>
</dbReference>
<dbReference type="Gene3D" id="1.20.1270.10">
    <property type="match status" value="1"/>
</dbReference>
<dbReference type="Gene3D" id="3.30.420.40">
    <property type="match status" value="2"/>
</dbReference>
<dbReference type="Gene3D" id="3.90.640.10">
    <property type="entry name" value="Actin, Chain A, domain 4"/>
    <property type="match status" value="1"/>
</dbReference>
<dbReference type="Gene3D" id="2.60.34.10">
    <property type="entry name" value="Substrate Binding Domain Of DNAk, Chain A, domain 1"/>
    <property type="match status" value="1"/>
</dbReference>
<dbReference type="HAMAP" id="MF_00332">
    <property type="entry name" value="DnaK"/>
    <property type="match status" value="1"/>
</dbReference>
<dbReference type="InterPro" id="IPR043129">
    <property type="entry name" value="ATPase_NBD"/>
</dbReference>
<dbReference type="InterPro" id="IPR012725">
    <property type="entry name" value="Chaperone_DnaK"/>
</dbReference>
<dbReference type="InterPro" id="IPR018181">
    <property type="entry name" value="Heat_shock_70_CS"/>
</dbReference>
<dbReference type="InterPro" id="IPR029048">
    <property type="entry name" value="HSP70_C_sf"/>
</dbReference>
<dbReference type="InterPro" id="IPR029047">
    <property type="entry name" value="HSP70_peptide-bd_sf"/>
</dbReference>
<dbReference type="InterPro" id="IPR013126">
    <property type="entry name" value="Hsp_70_fam"/>
</dbReference>
<dbReference type="NCBIfam" id="NF001413">
    <property type="entry name" value="PRK00290.1"/>
    <property type="match status" value="1"/>
</dbReference>
<dbReference type="NCBIfam" id="NF003520">
    <property type="entry name" value="PRK05183.1"/>
    <property type="match status" value="1"/>
</dbReference>
<dbReference type="NCBIfam" id="TIGR02350">
    <property type="entry name" value="prok_dnaK"/>
    <property type="match status" value="1"/>
</dbReference>
<dbReference type="PANTHER" id="PTHR19375">
    <property type="entry name" value="HEAT SHOCK PROTEIN 70KDA"/>
    <property type="match status" value="1"/>
</dbReference>
<dbReference type="Pfam" id="PF00012">
    <property type="entry name" value="HSP70"/>
    <property type="match status" value="1"/>
</dbReference>
<dbReference type="PRINTS" id="PR00301">
    <property type="entry name" value="HEATSHOCK70"/>
</dbReference>
<dbReference type="SUPFAM" id="SSF53067">
    <property type="entry name" value="Actin-like ATPase domain"/>
    <property type="match status" value="2"/>
</dbReference>
<dbReference type="SUPFAM" id="SSF100934">
    <property type="entry name" value="Heat shock protein 70kD (HSP70), C-terminal subdomain"/>
    <property type="match status" value="1"/>
</dbReference>
<dbReference type="SUPFAM" id="SSF100920">
    <property type="entry name" value="Heat shock protein 70kD (HSP70), peptide-binding domain"/>
    <property type="match status" value="1"/>
</dbReference>
<dbReference type="PROSITE" id="PS00297">
    <property type="entry name" value="HSP70_1"/>
    <property type="match status" value="1"/>
</dbReference>
<dbReference type="PROSITE" id="PS00329">
    <property type="entry name" value="HSP70_2"/>
    <property type="match status" value="1"/>
</dbReference>
<dbReference type="PROSITE" id="PS01036">
    <property type="entry name" value="HSP70_3"/>
    <property type="match status" value="1"/>
</dbReference>
<organism>
    <name type="scientific">Escherichia coli (strain ATCC 8739 / DSM 1576 / NBRC 3972 / NCIMB 8545 / WDCM 00012 / Crooks)</name>
    <dbReference type="NCBI Taxonomy" id="481805"/>
    <lineage>
        <taxon>Bacteria</taxon>
        <taxon>Pseudomonadati</taxon>
        <taxon>Pseudomonadota</taxon>
        <taxon>Gammaproteobacteria</taxon>
        <taxon>Enterobacterales</taxon>
        <taxon>Enterobacteriaceae</taxon>
        <taxon>Escherichia</taxon>
    </lineage>
</organism>